<dbReference type="EMBL" id="AP009484">
    <property type="protein sequence ID" value="BAH17463.1"/>
    <property type="molecule type" value="Genomic_DNA"/>
</dbReference>
<dbReference type="STRING" id="458233.MCCL_0756"/>
<dbReference type="KEGG" id="mcl:MCCL_0756"/>
<dbReference type="eggNOG" id="COG1589">
    <property type="taxonomic scope" value="Bacteria"/>
</dbReference>
<dbReference type="HOGENOM" id="CLU_046278_3_0_9"/>
<dbReference type="Proteomes" id="UP000001383">
    <property type="component" value="Chromosome"/>
</dbReference>
<dbReference type="GO" id="GO:0032153">
    <property type="term" value="C:cell division site"/>
    <property type="evidence" value="ECO:0007669"/>
    <property type="project" value="UniProtKB-UniRule"/>
</dbReference>
<dbReference type="GO" id="GO:0005886">
    <property type="term" value="C:plasma membrane"/>
    <property type="evidence" value="ECO:0007669"/>
    <property type="project" value="UniProtKB-SubCell"/>
</dbReference>
<dbReference type="GO" id="GO:0043093">
    <property type="term" value="P:FtsZ-dependent cytokinesis"/>
    <property type="evidence" value="ECO:0007669"/>
    <property type="project" value="UniProtKB-UniRule"/>
</dbReference>
<dbReference type="Gene3D" id="3.40.50.10960">
    <property type="match status" value="1"/>
</dbReference>
<dbReference type="Gene3D" id="3.10.20.310">
    <property type="entry name" value="membrane protein fhac"/>
    <property type="match status" value="1"/>
</dbReference>
<dbReference type="HAMAP" id="MF_00912">
    <property type="entry name" value="DivIB"/>
    <property type="match status" value="1"/>
</dbReference>
<dbReference type="InterPro" id="IPR005548">
    <property type="entry name" value="Cell_div_FtsQ/DivIB_C"/>
</dbReference>
<dbReference type="InterPro" id="IPR026580">
    <property type="entry name" value="DivIB"/>
</dbReference>
<dbReference type="InterPro" id="IPR050487">
    <property type="entry name" value="FtsQ_DivIB"/>
</dbReference>
<dbReference type="InterPro" id="IPR034746">
    <property type="entry name" value="POTRA"/>
</dbReference>
<dbReference type="InterPro" id="IPR013685">
    <property type="entry name" value="POTRA_FtsQ_type"/>
</dbReference>
<dbReference type="PANTHER" id="PTHR37820">
    <property type="entry name" value="CELL DIVISION PROTEIN DIVIB"/>
    <property type="match status" value="1"/>
</dbReference>
<dbReference type="PANTHER" id="PTHR37820:SF1">
    <property type="entry name" value="CELL DIVISION PROTEIN FTSQ"/>
    <property type="match status" value="1"/>
</dbReference>
<dbReference type="Pfam" id="PF03799">
    <property type="entry name" value="FtsQ_DivIB_C"/>
    <property type="match status" value="1"/>
</dbReference>
<dbReference type="Pfam" id="PF08478">
    <property type="entry name" value="POTRA_1"/>
    <property type="match status" value="1"/>
</dbReference>
<dbReference type="PROSITE" id="PS51779">
    <property type="entry name" value="POTRA"/>
    <property type="match status" value="1"/>
</dbReference>
<accession>B9EB52</accession>
<comment type="function">
    <text evidence="1">Cell division protein that may be involved in stabilizing or promoting the assembly of the division complex.</text>
</comment>
<comment type="subcellular location">
    <subcellularLocation>
        <location evidence="1">Cell membrane</location>
        <topology evidence="1">Single-pass type II membrane protein</topology>
    </subcellularLocation>
    <text evidence="1">Localizes to the division septum.</text>
</comment>
<comment type="similarity">
    <text evidence="1">Belongs to the FtsQ/DivIB family. DivIB subfamily.</text>
</comment>
<organism>
    <name type="scientific">Macrococcus caseolyticus (strain JCSC5402)</name>
    <name type="common">Macrococcoides caseolyticum</name>
    <dbReference type="NCBI Taxonomy" id="458233"/>
    <lineage>
        <taxon>Bacteria</taxon>
        <taxon>Bacillati</taxon>
        <taxon>Bacillota</taxon>
        <taxon>Bacilli</taxon>
        <taxon>Bacillales</taxon>
        <taxon>Staphylococcaceae</taxon>
        <taxon>Macrococcoides</taxon>
    </lineage>
</organism>
<reference key="1">
    <citation type="journal article" date="2009" name="J. Bacteriol.">
        <title>Complete genome sequence of Macrococcus caseolyticus strain JCSCS5402, reflecting the ancestral genome of the human-pathogenic staphylococci.</title>
        <authorList>
            <person name="Baba T."/>
            <person name="Kuwahara-Arai K."/>
            <person name="Uchiyama I."/>
            <person name="Takeuchi F."/>
            <person name="Ito T."/>
            <person name="Hiramatsu K."/>
        </authorList>
    </citation>
    <scope>NUCLEOTIDE SEQUENCE [LARGE SCALE GENOMIC DNA]</scope>
    <source>
        <strain>JCSC5402</strain>
    </source>
</reference>
<sequence>MMEDKIIHTPRFDEQRRMRRKKRQRLQLFIFLSIVAIVSLILIYMFTSISYVKKISVNDTSINSTKTIKEKSGIQSNMRIYSLDTKQIVSNIEYLDGVKSVTVRRHFPNTVSINVEEYDVLGVVKDGEHYHPALENGQILHKHNYAEPSEVPLINNFSSKALNQLVKVLRASDTAIINQISEINFIPKVEASHRVQFYMKNGLEVIGDMRTIDNKLNYFPAMASKLKKDSNGRILKPGIIDLEIGAVFIPYESKQAEERRIELEAAMEERSEKDKAELEKSVEKLKKELNQVKKNS</sequence>
<evidence type="ECO:0000255" key="1">
    <source>
        <dbReference type="HAMAP-Rule" id="MF_00912"/>
    </source>
</evidence>
<evidence type="ECO:0000255" key="2">
    <source>
        <dbReference type="PROSITE-ProRule" id="PRU01115"/>
    </source>
</evidence>
<name>DIVIB_MACCJ</name>
<keyword id="KW-0131">Cell cycle</keyword>
<keyword id="KW-0132">Cell division</keyword>
<keyword id="KW-1003">Cell membrane</keyword>
<keyword id="KW-0472">Membrane</keyword>
<keyword id="KW-1185">Reference proteome</keyword>
<keyword id="KW-0812">Transmembrane</keyword>
<keyword id="KW-1133">Transmembrane helix</keyword>
<gene>
    <name evidence="1" type="primary">divIB</name>
    <name type="ordered locus">MCCL_0756</name>
</gene>
<feature type="chain" id="PRO_0000414780" description="Cell division protein DivIB">
    <location>
        <begin position="1"/>
        <end position="296"/>
    </location>
</feature>
<feature type="topological domain" description="Cytoplasmic" evidence="1">
    <location>
        <begin position="1"/>
        <end position="25"/>
    </location>
</feature>
<feature type="transmembrane region" description="Helical" evidence="1">
    <location>
        <begin position="26"/>
        <end position="46"/>
    </location>
</feature>
<feature type="topological domain" description="Extracellular" evidence="1">
    <location>
        <begin position="47"/>
        <end position="296"/>
    </location>
</feature>
<feature type="domain" description="POTRA" evidence="2">
    <location>
        <begin position="50"/>
        <end position="118"/>
    </location>
</feature>
<protein>
    <recommendedName>
        <fullName evidence="1">Cell division protein DivIB</fullName>
    </recommendedName>
</protein>
<proteinExistence type="inferred from homology"/>